<keyword id="KW-0963">Cytoplasm</keyword>
<keyword id="KW-0285">Flavoprotein</keyword>
<keyword id="KW-0288">FMN</keyword>
<keyword id="KW-0413">Isomerase</keyword>
<keyword id="KW-0414">Isoprene biosynthesis</keyword>
<keyword id="KW-0460">Magnesium</keyword>
<keyword id="KW-0479">Metal-binding</keyword>
<keyword id="KW-0521">NADP</keyword>
<sequence>MGIEPNILENKKRHIDICLNKNDVKSGCNFLRFVKLKHNALSDFNFSEIDIKEEIFGYNISMPVFISSMTGGGKEGNDFNKSLVKIANYLKIPIGLGSFKLLFKYPEYIRDFALKRYAHSIPLFANIGAVQIVEFGISRIVEMIKRLEVDAIIVHLNAGQELMNVNGDRNFKGIKESIAKLSNFISVPLIVKETGFGISPSDVKKLFQLGVSYIDLAGSGGTNWVLVEGMKGNNLNIASCFSDWGIPSIFTLLSINDSLKANIFASGGYETGMDIAKGIALGAKLIGVAAVVLRAFYDSGEDAVFSLFSDYEHVLKMSMFLSGSKSLSDFRNNKYFLSSYLLAEFGVFKQFYGT</sequence>
<gene>
    <name evidence="1" type="primary">fni</name>
    <name type="ordered locus">BAPKO_0728</name>
    <name type="ordered locus">BafPKo_0709</name>
</gene>
<dbReference type="EC" id="5.3.3.2" evidence="1"/>
<dbReference type="EMBL" id="CP000395">
    <property type="protein sequence ID" value="ABH01959.1"/>
    <property type="molecule type" value="Genomic_DNA"/>
</dbReference>
<dbReference type="EMBL" id="CP002933">
    <property type="protein sequence ID" value="AEL69905.1"/>
    <property type="molecule type" value="Genomic_DNA"/>
</dbReference>
<dbReference type="RefSeq" id="WP_011601165.1">
    <property type="nucleotide sequence ID" value="NC_008277.1"/>
</dbReference>
<dbReference type="SMR" id="Q0SMG9"/>
<dbReference type="STRING" id="29518.BLA32_00815"/>
<dbReference type="KEGG" id="baf:BAPKO_0728"/>
<dbReference type="KEGG" id="bafz:BafPKo_0709"/>
<dbReference type="PATRIC" id="fig|390236.22.peg.677"/>
<dbReference type="eggNOG" id="COG1304">
    <property type="taxonomic scope" value="Bacteria"/>
</dbReference>
<dbReference type="HOGENOM" id="CLU_065515_1_0_12"/>
<dbReference type="OrthoDB" id="9795032at2"/>
<dbReference type="Proteomes" id="UP000005216">
    <property type="component" value="Chromosome"/>
</dbReference>
<dbReference type="GO" id="GO:0005737">
    <property type="term" value="C:cytoplasm"/>
    <property type="evidence" value="ECO:0007669"/>
    <property type="project" value="UniProtKB-SubCell"/>
</dbReference>
<dbReference type="GO" id="GO:0010181">
    <property type="term" value="F:FMN binding"/>
    <property type="evidence" value="ECO:0007669"/>
    <property type="project" value="UniProtKB-UniRule"/>
</dbReference>
<dbReference type="GO" id="GO:0004452">
    <property type="term" value="F:isopentenyl-diphosphate delta-isomerase activity"/>
    <property type="evidence" value="ECO:0007669"/>
    <property type="project" value="UniProtKB-UniRule"/>
</dbReference>
<dbReference type="GO" id="GO:0000287">
    <property type="term" value="F:magnesium ion binding"/>
    <property type="evidence" value="ECO:0007669"/>
    <property type="project" value="UniProtKB-UniRule"/>
</dbReference>
<dbReference type="GO" id="GO:0070402">
    <property type="term" value="F:NADPH binding"/>
    <property type="evidence" value="ECO:0007669"/>
    <property type="project" value="UniProtKB-UniRule"/>
</dbReference>
<dbReference type="GO" id="GO:0016491">
    <property type="term" value="F:oxidoreductase activity"/>
    <property type="evidence" value="ECO:0007669"/>
    <property type="project" value="InterPro"/>
</dbReference>
<dbReference type="GO" id="GO:0008299">
    <property type="term" value="P:isoprenoid biosynthetic process"/>
    <property type="evidence" value="ECO:0007669"/>
    <property type="project" value="UniProtKB-UniRule"/>
</dbReference>
<dbReference type="CDD" id="cd02811">
    <property type="entry name" value="IDI-2_FMN"/>
    <property type="match status" value="1"/>
</dbReference>
<dbReference type="Gene3D" id="3.20.20.70">
    <property type="entry name" value="Aldolase class I"/>
    <property type="match status" value="1"/>
</dbReference>
<dbReference type="HAMAP" id="MF_00354">
    <property type="entry name" value="Idi_2"/>
    <property type="match status" value="1"/>
</dbReference>
<dbReference type="InterPro" id="IPR013785">
    <property type="entry name" value="Aldolase_TIM"/>
</dbReference>
<dbReference type="InterPro" id="IPR000262">
    <property type="entry name" value="FMN-dep_DH"/>
</dbReference>
<dbReference type="InterPro" id="IPR011179">
    <property type="entry name" value="IPdP_isomerase"/>
</dbReference>
<dbReference type="NCBIfam" id="TIGR02151">
    <property type="entry name" value="IPP_isom_2"/>
    <property type="match status" value="1"/>
</dbReference>
<dbReference type="PANTHER" id="PTHR43665">
    <property type="entry name" value="ISOPENTENYL-DIPHOSPHATE DELTA-ISOMERASE"/>
    <property type="match status" value="1"/>
</dbReference>
<dbReference type="PANTHER" id="PTHR43665:SF1">
    <property type="entry name" value="ISOPENTENYL-DIPHOSPHATE DELTA-ISOMERASE"/>
    <property type="match status" value="1"/>
</dbReference>
<dbReference type="Pfam" id="PF01070">
    <property type="entry name" value="FMN_dh"/>
    <property type="match status" value="1"/>
</dbReference>
<dbReference type="PIRSF" id="PIRSF003314">
    <property type="entry name" value="IPP_isomerase"/>
    <property type="match status" value="1"/>
</dbReference>
<dbReference type="SUPFAM" id="SSF51395">
    <property type="entry name" value="FMN-linked oxidoreductases"/>
    <property type="match status" value="1"/>
</dbReference>
<proteinExistence type="inferred from homology"/>
<protein>
    <recommendedName>
        <fullName evidence="1">Isopentenyl-diphosphate delta-isomerase</fullName>
        <shortName evidence="1">IPP isomerase</shortName>
        <ecNumber evidence="1">5.3.3.2</ecNumber>
    </recommendedName>
    <alternativeName>
        <fullName evidence="1">Isopentenyl diphosphate:dimethylallyl diphosphate isomerase</fullName>
    </alternativeName>
    <alternativeName>
        <fullName evidence="1">Isopentenyl pyrophosphate isomerase</fullName>
    </alternativeName>
    <alternativeName>
        <fullName evidence="1">Type 2 isopentenyl diphosphate isomerase</fullName>
        <shortName evidence="1">IDI-2</shortName>
    </alternativeName>
</protein>
<comment type="function">
    <text evidence="1">Involved in the biosynthesis of isoprenoids. Catalyzes the 1,3-allylic rearrangement of the homoallylic substrate isopentenyl (IPP) to its allylic isomer, dimethylallyl diphosphate (DMAPP).</text>
</comment>
<comment type="catalytic activity">
    <reaction evidence="1">
        <text>isopentenyl diphosphate = dimethylallyl diphosphate</text>
        <dbReference type="Rhea" id="RHEA:23284"/>
        <dbReference type="ChEBI" id="CHEBI:57623"/>
        <dbReference type="ChEBI" id="CHEBI:128769"/>
        <dbReference type="EC" id="5.3.3.2"/>
    </reaction>
</comment>
<comment type="cofactor">
    <cofactor evidence="1">
        <name>FMN</name>
        <dbReference type="ChEBI" id="CHEBI:58210"/>
    </cofactor>
</comment>
<comment type="cofactor">
    <cofactor evidence="1">
        <name>NADPH</name>
        <dbReference type="ChEBI" id="CHEBI:57783"/>
    </cofactor>
</comment>
<comment type="cofactor">
    <cofactor evidence="1">
        <name>Mg(2+)</name>
        <dbReference type="ChEBI" id="CHEBI:18420"/>
    </cofactor>
</comment>
<comment type="subunit">
    <text evidence="1">Homooctamer. Dimer of tetramers.</text>
</comment>
<comment type="subcellular location">
    <subcellularLocation>
        <location evidence="1">Cytoplasm</location>
    </subcellularLocation>
</comment>
<comment type="similarity">
    <text evidence="1">Belongs to the IPP isomerase type 2 family.</text>
</comment>
<evidence type="ECO:0000255" key="1">
    <source>
        <dbReference type="HAMAP-Rule" id="MF_00354"/>
    </source>
</evidence>
<feature type="chain" id="PRO_1000048435" description="Isopentenyl-diphosphate delta-isomerase">
    <location>
        <begin position="1"/>
        <end position="354"/>
    </location>
</feature>
<feature type="binding site" evidence="1">
    <location>
        <begin position="11"/>
        <end position="12"/>
    </location>
    <ligand>
        <name>substrate</name>
    </ligand>
</feature>
<feature type="binding site" evidence="1">
    <location>
        <position position="67"/>
    </location>
    <ligand>
        <name>FMN</name>
        <dbReference type="ChEBI" id="CHEBI:58210"/>
    </ligand>
</feature>
<feature type="binding site" evidence="1">
    <location>
        <begin position="68"/>
        <end position="70"/>
    </location>
    <ligand>
        <name>FMN</name>
        <dbReference type="ChEBI" id="CHEBI:58210"/>
    </ligand>
</feature>
<feature type="binding site" evidence="1">
    <location>
        <begin position="98"/>
        <end position="100"/>
    </location>
    <ligand>
        <name>substrate</name>
    </ligand>
</feature>
<feature type="binding site" evidence="1">
    <location>
        <position position="98"/>
    </location>
    <ligand>
        <name>FMN</name>
        <dbReference type="ChEBI" id="CHEBI:58210"/>
    </ligand>
</feature>
<feature type="binding site" evidence="1">
    <location>
        <position position="126"/>
    </location>
    <ligand>
        <name>FMN</name>
        <dbReference type="ChEBI" id="CHEBI:58210"/>
    </ligand>
</feature>
<feature type="binding site" evidence="1">
    <location>
        <position position="160"/>
    </location>
    <ligand>
        <name>substrate</name>
    </ligand>
</feature>
<feature type="binding site" evidence="1">
    <location>
        <position position="161"/>
    </location>
    <ligand>
        <name>Mg(2+)</name>
        <dbReference type="ChEBI" id="CHEBI:18420"/>
    </ligand>
</feature>
<feature type="binding site" evidence="1">
    <location>
        <position position="192"/>
    </location>
    <ligand>
        <name>FMN</name>
        <dbReference type="ChEBI" id="CHEBI:58210"/>
    </ligand>
</feature>
<feature type="binding site" evidence="1">
    <location>
        <position position="222"/>
    </location>
    <ligand>
        <name>FMN</name>
        <dbReference type="ChEBI" id="CHEBI:58210"/>
    </ligand>
</feature>
<feature type="binding site" evidence="1">
    <location>
        <begin position="289"/>
        <end position="290"/>
    </location>
    <ligand>
        <name>FMN</name>
        <dbReference type="ChEBI" id="CHEBI:58210"/>
    </ligand>
</feature>
<reference key="1">
    <citation type="journal article" date="2006" name="BMC Genomics">
        <title>Comparative genome analysis: selection pressure on the Borrelia vls cassettes is essential for infectivity.</title>
        <authorList>
            <person name="Gloeckner G."/>
            <person name="Schulte-Spechtel U."/>
            <person name="Schilhabel M."/>
            <person name="Felder M."/>
            <person name="Suehnel J."/>
            <person name="Wilske B."/>
            <person name="Platzer M."/>
        </authorList>
    </citation>
    <scope>NUCLEOTIDE SEQUENCE [LARGE SCALE GENOMIC DNA]</scope>
    <source>
        <strain>PKo</strain>
    </source>
</reference>
<reference key="2">
    <citation type="journal article" date="2011" name="J. Bacteriol.">
        <title>Whole-genome sequences of two Borrelia afzelii and two Borrelia garinii Lyme disease agent isolates.</title>
        <authorList>
            <person name="Casjens S.R."/>
            <person name="Mongodin E.F."/>
            <person name="Qiu W.G."/>
            <person name="Dunn J.J."/>
            <person name="Luft B.J."/>
            <person name="Fraser-Liggett C.M."/>
            <person name="Schutzer S.E."/>
        </authorList>
    </citation>
    <scope>NUCLEOTIDE SEQUENCE [LARGE SCALE GENOMIC DNA]</scope>
    <source>
        <strain>PKo</strain>
    </source>
</reference>
<organism>
    <name type="scientific">Borreliella afzelii (strain PKo)</name>
    <name type="common">Borrelia afzelii</name>
    <dbReference type="NCBI Taxonomy" id="390236"/>
    <lineage>
        <taxon>Bacteria</taxon>
        <taxon>Pseudomonadati</taxon>
        <taxon>Spirochaetota</taxon>
        <taxon>Spirochaetia</taxon>
        <taxon>Spirochaetales</taxon>
        <taxon>Borreliaceae</taxon>
        <taxon>Borreliella</taxon>
    </lineage>
</organism>
<accession>Q0SMG9</accession>
<accession>G0IRD9</accession>
<name>IDI2_BORAP</name>